<organism>
    <name type="scientific">Brucella anthropi (strain ATCC 49188 / DSM 6882 / CCUG 24695 / JCM 21032 / LMG 3331 / NBRC 15819 / NCTC 12168 / Alc 37)</name>
    <name type="common">Ochrobactrum anthropi</name>
    <dbReference type="NCBI Taxonomy" id="439375"/>
    <lineage>
        <taxon>Bacteria</taxon>
        <taxon>Pseudomonadati</taxon>
        <taxon>Pseudomonadota</taxon>
        <taxon>Alphaproteobacteria</taxon>
        <taxon>Hyphomicrobiales</taxon>
        <taxon>Brucellaceae</taxon>
        <taxon>Brucella/Ochrobactrum group</taxon>
        <taxon>Brucella</taxon>
    </lineage>
</organism>
<dbReference type="EC" id="1.3.1.98" evidence="1"/>
<dbReference type="EMBL" id="CP000758">
    <property type="protein sequence ID" value="ABS14462.1"/>
    <property type="molecule type" value="Genomic_DNA"/>
</dbReference>
<dbReference type="RefSeq" id="WP_012091750.1">
    <property type="nucleotide sequence ID" value="NC_009667.1"/>
</dbReference>
<dbReference type="SMR" id="A6WZQ8"/>
<dbReference type="STRING" id="439375.Oant_1746"/>
<dbReference type="KEGG" id="oan:Oant_1746"/>
<dbReference type="PATRIC" id="fig|439375.7.peg.1847"/>
<dbReference type="eggNOG" id="COG0812">
    <property type="taxonomic scope" value="Bacteria"/>
</dbReference>
<dbReference type="HOGENOM" id="CLU_035304_1_0_5"/>
<dbReference type="PhylomeDB" id="A6WZQ8"/>
<dbReference type="UniPathway" id="UPA00219"/>
<dbReference type="Proteomes" id="UP000002301">
    <property type="component" value="Chromosome 1"/>
</dbReference>
<dbReference type="GO" id="GO:0005829">
    <property type="term" value="C:cytosol"/>
    <property type="evidence" value="ECO:0007669"/>
    <property type="project" value="TreeGrafter"/>
</dbReference>
<dbReference type="GO" id="GO:0071949">
    <property type="term" value="F:FAD binding"/>
    <property type="evidence" value="ECO:0007669"/>
    <property type="project" value="InterPro"/>
</dbReference>
<dbReference type="GO" id="GO:0008762">
    <property type="term" value="F:UDP-N-acetylmuramate dehydrogenase activity"/>
    <property type="evidence" value="ECO:0007669"/>
    <property type="project" value="UniProtKB-UniRule"/>
</dbReference>
<dbReference type="GO" id="GO:0051301">
    <property type="term" value="P:cell division"/>
    <property type="evidence" value="ECO:0007669"/>
    <property type="project" value="UniProtKB-KW"/>
</dbReference>
<dbReference type="GO" id="GO:0071555">
    <property type="term" value="P:cell wall organization"/>
    <property type="evidence" value="ECO:0007669"/>
    <property type="project" value="UniProtKB-KW"/>
</dbReference>
<dbReference type="GO" id="GO:0009252">
    <property type="term" value="P:peptidoglycan biosynthetic process"/>
    <property type="evidence" value="ECO:0007669"/>
    <property type="project" value="UniProtKB-UniRule"/>
</dbReference>
<dbReference type="GO" id="GO:0008360">
    <property type="term" value="P:regulation of cell shape"/>
    <property type="evidence" value="ECO:0007669"/>
    <property type="project" value="UniProtKB-KW"/>
</dbReference>
<dbReference type="Gene3D" id="3.30.465.10">
    <property type="match status" value="1"/>
</dbReference>
<dbReference type="Gene3D" id="3.90.78.10">
    <property type="entry name" value="UDP-N-acetylenolpyruvoylglucosamine reductase, C-terminal domain"/>
    <property type="match status" value="1"/>
</dbReference>
<dbReference type="Gene3D" id="3.30.43.10">
    <property type="entry name" value="Uridine Diphospho-n-acetylenolpyruvylglucosamine Reductase, domain 2"/>
    <property type="match status" value="1"/>
</dbReference>
<dbReference type="HAMAP" id="MF_00037">
    <property type="entry name" value="MurB"/>
    <property type="match status" value="1"/>
</dbReference>
<dbReference type="InterPro" id="IPR016166">
    <property type="entry name" value="FAD-bd_PCMH"/>
</dbReference>
<dbReference type="InterPro" id="IPR036318">
    <property type="entry name" value="FAD-bd_PCMH-like_sf"/>
</dbReference>
<dbReference type="InterPro" id="IPR016167">
    <property type="entry name" value="FAD-bd_PCMH_sub1"/>
</dbReference>
<dbReference type="InterPro" id="IPR016169">
    <property type="entry name" value="FAD-bd_PCMH_sub2"/>
</dbReference>
<dbReference type="InterPro" id="IPR003170">
    <property type="entry name" value="MurB"/>
</dbReference>
<dbReference type="InterPro" id="IPR011601">
    <property type="entry name" value="MurB_C"/>
</dbReference>
<dbReference type="InterPro" id="IPR036635">
    <property type="entry name" value="MurB_C_sf"/>
</dbReference>
<dbReference type="InterPro" id="IPR006094">
    <property type="entry name" value="Oxid_FAD_bind_N"/>
</dbReference>
<dbReference type="NCBIfam" id="TIGR00179">
    <property type="entry name" value="murB"/>
    <property type="match status" value="1"/>
</dbReference>
<dbReference type="NCBIfam" id="NF010480">
    <property type="entry name" value="PRK13905.1"/>
    <property type="match status" value="1"/>
</dbReference>
<dbReference type="PANTHER" id="PTHR21071">
    <property type="entry name" value="UDP-N-ACETYLENOLPYRUVOYLGLUCOSAMINE REDUCTASE"/>
    <property type="match status" value="1"/>
</dbReference>
<dbReference type="PANTHER" id="PTHR21071:SF4">
    <property type="entry name" value="UDP-N-ACETYLENOLPYRUVOYLGLUCOSAMINE REDUCTASE"/>
    <property type="match status" value="1"/>
</dbReference>
<dbReference type="Pfam" id="PF01565">
    <property type="entry name" value="FAD_binding_4"/>
    <property type="match status" value="1"/>
</dbReference>
<dbReference type="Pfam" id="PF02873">
    <property type="entry name" value="MurB_C"/>
    <property type="match status" value="1"/>
</dbReference>
<dbReference type="SUPFAM" id="SSF56176">
    <property type="entry name" value="FAD-binding/transporter-associated domain-like"/>
    <property type="match status" value="1"/>
</dbReference>
<dbReference type="SUPFAM" id="SSF56194">
    <property type="entry name" value="Uridine diphospho-N-Acetylenolpyruvylglucosamine reductase, MurB, C-terminal domain"/>
    <property type="match status" value="1"/>
</dbReference>
<dbReference type="PROSITE" id="PS51387">
    <property type="entry name" value="FAD_PCMH"/>
    <property type="match status" value="1"/>
</dbReference>
<name>MURB_BRUA4</name>
<reference key="1">
    <citation type="journal article" date="2011" name="J. Bacteriol.">
        <title>Genome of Ochrobactrum anthropi ATCC 49188 T, a versatile opportunistic pathogen and symbiont of several eukaryotic hosts.</title>
        <authorList>
            <person name="Chain P.S."/>
            <person name="Lang D.M."/>
            <person name="Comerci D.J."/>
            <person name="Malfatti S.A."/>
            <person name="Vergez L.M."/>
            <person name="Shin M."/>
            <person name="Ugalde R.A."/>
            <person name="Garcia E."/>
            <person name="Tolmasky M.E."/>
        </authorList>
    </citation>
    <scope>NUCLEOTIDE SEQUENCE [LARGE SCALE GENOMIC DNA]</scope>
    <source>
        <strain>ATCC 49188 / DSM 6882 / CCUG 24695 / JCM 21032 / LMG 3331 / NBRC 15819 / NCTC 12168 / Alc 37</strain>
    </source>
</reference>
<gene>
    <name evidence="1" type="primary">murB</name>
    <name type="ordered locus">Oant_1746</name>
</gene>
<feature type="chain" id="PRO_0000332484" description="UDP-N-acetylenolpyruvoylglucosamine reductase">
    <location>
        <begin position="1"/>
        <end position="320"/>
    </location>
</feature>
<feature type="domain" description="FAD-binding PCMH-type" evidence="1">
    <location>
        <begin position="35"/>
        <end position="216"/>
    </location>
</feature>
<feature type="active site" evidence="1">
    <location>
        <position position="181"/>
    </location>
</feature>
<feature type="active site" description="Proton donor" evidence="1">
    <location>
        <position position="230"/>
    </location>
</feature>
<feature type="active site" evidence="1">
    <location>
        <position position="300"/>
    </location>
</feature>
<proteinExistence type="inferred from homology"/>
<accession>A6WZQ8</accession>
<keyword id="KW-0131">Cell cycle</keyword>
<keyword id="KW-0132">Cell division</keyword>
<keyword id="KW-0133">Cell shape</keyword>
<keyword id="KW-0961">Cell wall biogenesis/degradation</keyword>
<keyword id="KW-0963">Cytoplasm</keyword>
<keyword id="KW-0274">FAD</keyword>
<keyword id="KW-0285">Flavoprotein</keyword>
<keyword id="KW-0521">NADP</keyword>
<keyword id="KW-0560">Oxidoreductase</keyword>
<keyword id="KW-0573">Peptidoglycan synthesis</keyword>
<keyword id="KW-1185">Reference proteome</keyword>
<sequence length="320" mass="34493">MESGETLLKKLDGKLSGLRGRLTPDTGMDKITWFRAGGPAQVLFQPADEEDLSSFLKAVPEEVPILVVGIGSNLLVRDGGVPGFVVRLSAKGFGEVDQVSETQLRAGAATPDKRVAAAALEAGLAGFHFYHGIPGGMGGALRMNAGANGVETRERVVEVRALDRKGEVHVLSNADMGYAYRHSSASSDLIFTSVLFEGTPGEHEAIKQAMDEVQHHRETVQPVREKTGGSTFKNPEGTSAWKEIDKAGCRGLRVGGAQMSEMHCNFMINTGTATGLDLETLGETVRARVFENSGIRLHWEIKRLGLFREGEAVEEFLGKF</sequence>
<protein>
    <recommendedName>
        <fullName evidence="1">UDP-N-acetylenolpyruvoylglucosamine reductase</fullName>
        <ecNumber evidence="1">1.3.1.98</ecNumber>
    </recommendedName>
    <alternativeName>
        <fullName evidence="1">UDP-N-acetylmuramate dehydrogenase</fullName>
    </alternativeName>
</protein>
<evidence type="ECO:0000255" key="1">
    <source>
        <dbReference type="HAMAP-Rule" id="MF_00037"/>
    </source>
</evidence>
<comment type="function">
    <text evidence="1">Cell wall formation.</text>
</comment>
<comment type="catalytic activity">
    <reaction evidence="1">
        <text>UDP-N-acetyl-alpha-D-muramate + NADP(+) = UDP-N-acetyl-3-O-(1-carboxyvinyl)-alpha-D-glucosamine + NADPH + H(+)</text>
        <dbReference type="Rhea" id="RHEA:12248"/>
        <dbReference type="ChEBI" id="CHEBI:15378"/>
        <dbReference type="ChEBI" id="CHEBI:57783"/>
        <dbReference type="ChEBI" id="CHEBI:58349"/>
        <dbReference type="ChEBI" id="CHEBI:68483"/>
        <dbReference type="ChEBI" id="CHEBI:70757"/>
        <dbReference type="EC" id="1.3.1.98"/>
    </reaction>
</comment>
<comment type="cofactor">
    <cofactor evidence="1">
        <name>FAD</name>
        <dbReference type="ChEBI" id="CHEBI:57692"/>
    </cofactor>
</comment>
<comment type="pathway">
    <text evidence="1">Cell wall biogenesis; peptidoglycan biosynthesis.</text>
</comment>
<comment type="subcellular location">
    <subcellularLocation>
        <location evidence="1">Cytoplasm</location>
    </subcellularLocation>
</comment>
<comment type="similarity">
    <text evidence="1">Belongs to the MurB family.</text>
</comment>